<reference key="1">
    <citation type="journal article" date="2009" name="PLoS Genet.">
        <title>Organised genome dynamics in the Escherichia coli species results in highly diverse adaptive paths.</title>
        <authorList>
            <person name="Touchon M."/>
            <person name="Hoede C."/>
            <person name="Tenaillon O."/>
            <person name="Barbe V."/>
            <person name="Baeriswyl S."/>
            <person name="Bidet P."/>
            <person name="Bingen E."/>
            <person name="Bonacorsi S."/>
            <person name="Bouchier C."/>
            <person name="Bouvet O."/>
            <person name="Calteau A."/>
            <person name="Chiapello H."/>
            <person name="Clermont O."/>
            <person name="Cruveiller S."/>
            <person name="Danchin A."/>
            <person name="Diard M."/>
            <person name="Dossat C."/>
            <person name="Karoui M.E."/>
            <person name="Frapy E."/>
            <person name="Garry L."/>
            <person name="Ghigo J.M."/>
            <person name="Gilles A.M."/>
            <person name="Johnson J."/>
            <person name="Le Bouguenec C."/>
            <person name="Lescat M."/>
            <person name="Mangenot S."/>
            <person name="Martinez-Jehanne V."/>
            <person name="Matic I."/>
            <person name="Nassif X."/>
            <person name="Oztas S."/>
            <person name="Petit M.A."/>
            <person name="Pichon C."/>
            <person name="Rouy Z."/>
            <person name="Ruf C.S."/>
            <person name="Schneider D."/>
            <person name="Tourret J."/>
            <person name="Vacherie B."/>
            <person name="Vallenet D."/>
            <person name="Medigue C."/>
            <person name="Rocha E.P.C."/>
            <person name="Denamur E."/>
        </authorList>
    </citation>
    <scope>NUCLEOTIDE SEQUENCE [LARGE SCALE GENOMIC DNA]</scope>
    <source>
        <strain>ATCC 35469 / DSM 13698 / BCRC 15582 / CCUG 18766 / IAM 14443 / JCM 21226 / LMG 7866 / NBRC 102419 / NCTC 12128 / CDC 0568-73</strain>
    </source>
</reference>
<keyword id="KW-0028">Amino-acid biosynthesis</keyword>
<keyword id="KW-0057">Aromatic amino acid biosynthesis</keyword>
<keyword id="KW-0067">ATP-binding</keyword>
<keyword id="KW-0963">Cytoplasm</keyword>
<keyword id="KW-0418">Kinase</keyword>
<keyword id="KW-0460">Magnesium</keyword>
<keyword id="KW-0479">Metal-binding</keyword>
<keyword id="KW-0547">Nucleotide-binding</keyword>
<keyword id="KW-0808">Transferase</keyword>
<name>AROL_ESCF3</name>
<sequence>MIQPLFLVGPRGCGKTTVGKALADALERRFVDTDQWLQANVQMTVADIVEREGWAGFRAREAAALEAVTAPATVVATGGGIILAEQNRHFMRNNGIVIYLSAPVDVLVNRLEAEPEVGLRPTLTGKSLSEEVAEVLEQRDILYRETANIIVDATYEPGQVISEIRALLDQMALRNLGGAYT</sequence>
<organism>
    <name type="scientific">Escherichia fergusonii (strain ATCC 35469 / DSM 13698 / CCUG 18766 / IAM 14443 / JCM 21226 / LMG 7866 / NBRC 102419 / NCTC 12128 / CDC 0568-73)</name>
    <dbReference type="NCBI Taxonomy" id="585054"/>
    <lineage>
        <taxon>Bacteria</taxon>
        <taxon>Pseudomonadati</taxon>
        <taxon>Pseudomonadota</taxon>
        <taxon>Gammaproteobacteria</taxon>
        <taxon>Enterobacterales</taxon>
        <taxon>Enterobacteriaceae</taxon>
        <taxon>Escherichia</taxon>
    </lineage>
</organism>
<evidence type="ECO:0000255" key="1">
    <source>
        <dbReference type="HAMAP-Rule" id="MF_01269"/>
    </source>
</evidence>
<feature type="chain" id="PRO_1000140136" description="Shikimate kinase 2">
    <location>
        <begin position="1"/>
        <end position="181"/>
    </location>
</feature>
<feature type="region of interest" description="LID domain">
    <location>
        <begin position="112"/>
        <end position="126"/>
    </location>
</feature>
<feature type="binding site" evidence="1">
    <location>
        <begin position="12"/>
        <end position="17"/>
    </location>
    <ligand>
        <name>ATP</name>
        <dbReference type="ChEBI" id="CHEBI:30616"/>
    </ligand>
</feature>
<feature type="binding site" evidence="1">
    <location>
        <position position="16"/>
    </location>
    <ligand>
        <name>Mg(2+)</name>
        <dbReference type="ChEBI" id="CHEBI:18420"/>
    </ligand>
</feature>
<feature type="binding site" evidence="1">
    <location>
        <position position="32"/>
    </location>
    <ligand>
        <name>Mg(2+)</name>
        <dbReference type="ChEBI" id="CHEBI:18420"/>
    </ligand>
</feature>
<feature type="binding site" evidence="1">
    <location>
        <position position="34"/>
    </location>
    <ligand>
        <name>substrate</name>
    </ligand>
</feature>
<feature type="binding site" evidence="1">
    <location>
        <position position="58"/>
    </location>
    <ligand>
        <name>substrate</name>
    </ligand>
</feature>
<feature type="binding site" evidence="1">
    <location>
        <position position="79"/>
    </location>
    <ligand>
        <name>substrate</name>
    </ligand>
</feature>
<feature type="binding site" evidence="1">
    <location>
        <position position="120"/>
    </location>
    <ligand>
        <name>ATP</name>
        <dbReference type="ChEBI" id="CHEBI:30616"/>
    </ligand>
</feature>
<feature type="binding site" evidence="1">
    <location>
        <position position="139"/>
    </location>
    <ligand>
        <name>substrate</name>
    </ligand>
</feature>
<comment type="function">
    <text evidence="1">Catalyzes the specific phosphorylation of the 3-hydroxyl group of shikimic acid using ATP as a cosubstrate.</text>
</comment>
<comment type="catalytic activity">
    <reaction evidence="1">
        <text>shikimate + ATP = 3-phosphoshikimate + ADP + H(+)</text>
        <dbReference type="Rhea" id="RHEA:13121"/>
        <dbReference type="ChEBI" id="CHEBI:15378"/>
        <dbReference type="ChEBI" id="CHEBI:30616"/>
        <dbReference type="ChEBI" id="CHEBI:36208"/>
        <dbReference type="ChEBI" id="CHEBI:145989"/>
        <dbReference type="ChEBI" id="CHEBI:456216"/>
        <dbReference type="EC" id="2.7.1.71"/>
    </reaction>
</comment>
<comment type="cofactor">
    <cofactor evidence="1">
        <name>Mg(2+)</name>
        <dbReference type="ChEBI" id="CHEBI:18420"/>
    </cofactor>
    <text evidence="1">Binds 1 Mg(2+) ion per subunit.</text>
</comment>
<comment type="pathway">
    <text evidence="1">Metabolic intermediate biosynthesis; chorismate biosynthesis; chorismate from D-erythrose 4-phosphate and phosphoenolpyruvate: step 5/7.</text>
</comment>
<comment type="subunit">
    <text evidence="1">Monomer.</text>
</comment>
<comment type="subcellular location">
    <subcellularLocation>
        <location evidence="1">Cytoplasm</location>
    </subcellularLocation>
</comment>
<comment type="domain">
    <text evidence="1">The LID domain closes over the active site upon ATP binding.</text>
</comment>
<comment type="similarity">
    <text evidence="1">Belongs to the shikimate kinase family. AroL subfamily.</text>
</comment>
<gene>
    <name evidence="1" type="primary">aroL</name>
    <name type="ordered locus">EFER_2635</name>
</gene>
<proteinExistence type="inferred from homology"/>
<protein>
    <recommendedName>
        <fullName evidence="1">Shikimate kinase 2</fullName>
        <shortName evidence="1">SK 2</shortName>
        <ecNumber evidence="1">2.7.1.71</ecNumber>
    </recommendedName>
</protein>
<dbReference type="EC" id="2.7.1.71" evidence="1"/>
<dbReference type="EMBL" id="CU928158">
    <property type="protein sequence ID" value="CAQ90130.1"/>
    <property type="molecule type" value="Genomic_DNA"/>
</dbReference>
<dbReference type="RefSeq" id="WP_000615846.1">
    <property type="nucleotide sequence ID" value="NC_011740.1"/>
</dbReference>
<dbReference type="SMR" id="B7LMJ7"/>
<dbReference type="GeneID" id="75056335"/>
<dbReference type="KEGG" id="efe:EFER_2635"/>
<dbReference type="HOGENOM" id="CLU_057607_4_3_6"/>
<dbReference type="OrthoDB" id="9800332at2"/>
<dbReference type="UniPathway" id="UPA00053">
    <property type="reaction ID" value="UER00088"/>
</dbReference>
<dbReference type="Proteomes" id="UP000000745">
    <property type="component" value="Chromosome"/>
</dbReference>
<dbReference type="GO" id="GO:0005829">
    <property type="term" value="C:cytosol"/>
    <property type="evidence" value="ECO:0007669"/>
    <property type="project" value="TreeGrafter"/>
</dbReference>
<dbReference type="GO" id="GO:0005524">
    <property type="term" value="F:ATP binding"/>
    <property type="evidence" value="ECO:0007669"/>
    <property type="project" value="UniProtKB-UniRule"/>
</dbReference>
<dbReference type="GO" id="GO:0000287">
    <property type="term" value="F:magnesium ion binding"/>
    <property type="evidence" value="ECO:0007669"/>
    <property type="project" value="UniProtKB-UniRule"/>
</dbReference>
<dbReference type="GO" id="GO:0004765">
    <property type="term" value="F:shikimate kinase activity"/>
    <property type="evidence" value="ECO:0007669"/>
    <property type="project" value="UniProtKB-UniRule"/>
</dbReference>
<dbReference type="GO" id="GO:0008652">
    <property type="term" value="P:amino acid biosynthetic process"/>
    <property type="evidence" value="ECO:0007669"/>
    <property type="project" value="UniProtKB-KW"/>
</dbReference>
<dbReference type="GO" id="GO:0009073">
    <property type="term" value="P:aromatic amino acid family biosynthetic process"/>
    <property type="evidence" value="ECO:0007669"/>
    <property type="project" value="UniProtKB-KW"/>
</dbReference>
<dbReference type="GO" id="GO:0009423">
    <property type="term" value="P:chorismate biosynthetic process"/>
    <property type="evidence" value="ECO:0007669"/>
    <property type="project" value="UniProtKB-UniRule"/>
</dbReference>
<dbReference type="CDD" id="cd00464">
    <property type="entry name" value="SK"/>
    <property type="match status" value="1"/>
</dbReference>
<dbReference type="FunFam" id="3.40.50.300:FF:000408">
    <property type="entry name" value="Shikimate kinase 2"/>
    <property type="match status" value="1"/>
</dbReference>
<dbReference type="Gene3D" id="3.40.50.300">
    <property type="entry name" value="P-loop containing nucleotide triphosphate hydrolases"/>
    <property type="match status" value="1"/>
</dbReference>
<dbReference type="HAMAP" id="MF_00109">
    <property type="entry name" value="Shikimate_kinase"/>
    <property type="match status" value="1"/>
</dbReference>
<dbReference type="HAMAP" id="MF_01269">
    <property type="entry name" value="Shikimate_kinase_2"/>
    <property type="match status" value="1"/>
</dbReference>
<dbReference type="InterPro" id="IPR027417">
    <property type="entry name" value="P-loop_NTPase"/>
</dbReference>
<dbReference type="InterPro" id="IPR031322">
    <property type="entry name" value="Shikimate/glucono_kinase"/>
</dbReference>
<dbReference type="InterPro" id="IPR000623">
    <property type="entry name" value="Shikimate_kinase/TSH1"/>
</dbReference>
<dbReference type="InterPro" id="IPR027544">
    <property type="entry name" value="Shikimate_kinase_2"/>
</dbReference>
<dbReference type="InterPro" id="IPR023000">
    <property type="entry name" value="Shikimate_kinase_CS"/>
</dbReference>
<dbReference type="NCBIfam" id="NF002988">
    <property type="entry name" value="PRK03731.1"/>
    <property type="match status" value="1"/>
</dbReference>
<dbReference type="PANTHER" id="PTHR21087">
    <property type="entry name" value="SHIKIMATE KINASE"/>
    <property type="match status" value="1"/>
</dbReference>
<dbReference type="PANTHER" id="PTHR21087:SF21">
    <property type="entry name" value="SHIKIMATE KINASE 2"/>
    <property type="match status" value="1"/>
</dbReference>
<dbReference type="Pfam" id="PF01202">
    <property type="entry name" value="SKI"/>
    <property type="match status" value="1"/>
</dbReference>
<dbReference type="PRINTS" id="PR01100">
    <property type="entry name" value="SHIKIMTKNASE"/>
</dbReference>
<dbReference type="SUPFAM" id="SSF52540">
    <property type="entry name" value="P-loop containing nucleoside triphosphate hydrolases"/>
    <property type="match status" value="1"/>
</dbReference>
<dbReference type="PROSITE" id="PS01128">
    <property type="entry name" value="SHIKIMATE_KINASE"/>
    <property type="match status" value="1"/>
</dbReference>
<accession>B7LMJ7</accession>